<feature type="chain" id="PRO_0000283393" description="Putative F-box protein At2g33190">
    <location>
        <begin position="1"/>
        <end position="379"/>
    </location>
</feature>
<feature type="domain" description="F-box">
    <location>
        <begin position="6"/>
        <end position="53"/>
    </location>
</feature>
<proteinExistence type="predicted"/>
<protein>
    <recommendedName>
        <fullName>Putative F-box protein At2g33190</fullName>
    </recommendedName>
</protein>
<sequence length="379" mass="43983">MSRDDNGWSKLYPDLLRSIFESLSCLDFHRAGTVCSNWYAVSRSCPLYPWRIVFRGKNSVLFDPIQDKIYTKNLLGIDLSKIHCLASYGNWILIVDPRLDFYLLNVFTRETINLPSLESSLRGDRPFRFIRNDDESGYFLELYGTKFLLTWNDFRFEKTAILWVNGRNGDYVVAWAIKQFYIFSYKKIGNDDDDKRWSITCTQCEDMAYKDNKLYVYTFDHYINILDFSGNSPKEPMEENPYLSHPFSFVDAIYKLRLAVTREGKVLIVLSLVGLDKKICIYKLNLKIGDWEIVESLGDEMLIFGHGVTIRAPDKDISGGGLKSDSICFLYDDYLSDHYLTMKRQPICGVFDLATSTITWHTRLEDLSSKICWFVPGCA</sequence>
<gene>
    <name type="ordered locus">At2g33190</name>
    <name type="ORF">F25I18.7</name>
</gene>
<accession>O49316</accession>
<keyword id="KW-1185">Reference proteome</keyword>
<dbReference type="EMBL" id="AC002334">
    <property type="protein sequence ID" value="AAC04904.1"/>
    <property type="molecule type" value="Genomic_DNA"/>
</dbReference>
<dbReference type="EMBL" id="CP002685">
    <property type="protein sequence ID" value="AEC08796.1"/>
    <property type="molecule type" value="Genomic_DNA"/>
</dbReference>
<dbReference type="PIR" id="D84742">
    <property type="entry name" value="D84742"/>
</dbReference>
<dbReference type="RefSeq" id="NP_180877.1">
    <property type="nucleotide sequence ID" value="NM_128878.2"/>
</dbReference>
<dbReference type="FunCoup" id="O49316">
    <property type="interactions" value="35"/>
</dbReference>
<dbReference type="PaxDb" id="3702-AT2G33190.1"/>
<dbReference type="EnsemblPlants" id="AT2G33190.1">
    <property type="protein sequence ID" value="AT2G33190.1"/>
    <property type="gene ID" value="AT2G33190"/>
</dbReference>
<dbReference type="GeneID" id="817880"/>
<dbReference type="Gramene" id="AT2G33190.1">
    <property type="protein sequence ID" value="AT2G33190.1"/>
    <property type="gene ID" value="AT2G33190"/>
</dbReference>
<dbReference type="KEGG" id="ath:AT2G33190"/>
<dbReference type="Araport" id="AT2G33190"/>
<dbReference type="TAIR" id="AT2G33190">
    <property type="gene designation" value="ATFDB16"/>
</dbReference>
<dbReference type="HOGENOM" id="CLU_019286_7_1_1"/>
<dbReference type="InParanoid" id="O49316"/>
<dbReference type="OMA" id="STITWHT"/>
<dbReference type="PhylomeDB" id="O49316"/>
<dbReference type="PRO" id="PR:O49316"/>
<dbReference type="Proteomes" id="UP000006548">
    <property type="component" value="Chromosome 2"/>
</dbReference>
<dbReference type="ExpressionAtlas" id="O49316">
    <property type="expression patterns" value="baseline and differential"/>
</dbReference>
<dbReference type="Gene3D" id="1.20.1280.50">
    <property type="match status" value="1"/>
</dbReference>
<dbReference type="InterPro" id="IPR036047">
    <property type="entry name" value="F-box-like_dom_sf"/>
</dbReference>
<dbReference type="InterPro" id="IPR050942">
    <property type="entry name" value="F-box_BR-signaling"/>
</dbReference>
<dbReference type="InterPro" id="IPR001810">
    <property type="entry name" value="F-box_dom"/>
</dbReference>
<dbReference type="InterPro" id="IPR005174">
    <property type="entry name" value="KIB1-4_b-propeller"/>
</dbReference>
<dbReference type="PANTHER" id="PTHR44259:SF98">
    <property type="entry name" value="GENOME ASSEMBLY, CHROMOSOME: A05"/>
    <property type="match status" value="1"/>
</dbReference>
<dbReference type="PANTHER" id="PTHR44259">
    <property type="entry name" value="OS07G0183000 PROTEIN-RELATED"/>
    <property type="match status" value="1"/>
</dbReference>
<dbReference type="Pfam" id="PF03478">
    <property type="entry name" value="Beta-prop_KIB1-4"/>
    <property type="match status" value="1"/>
</dbReference>
<dbReference type="Pfam" id="PF00646">
    <property type="entry name" value="F-box"/>
    <property type="match status" value="1"/>
</dbReference>
<dbReference type="SUPFAM" id="SSF81383">
    <property type="entry name" value="F-box domain"/>
    <property type="match status" value="1"/>
</dbReference>
<organism>
    <name type="scientific">Arabidopsis thaliana</name>
    <name type="common">Mouse-ear cress</name>
    <dbReference type="NCBI Taxonomy" id="3702"/>
    <lineage>
        <taxon>Eukaryota</taxon>
        <taxon>Viridiplantae</taxon>
        <taxon>Streptophyta</taxon>
        <taxon>Embryophyta</taxon>
        <taxon>Tracheophyta</taxon>
        <taxon>Spermatophyta</taxon>
        <taxon>Magnoliopsida</taxon>
        <taxon>eudicotyledons</taxon>
        <taxon>Gunneridae</taxon>
        <taxon>Pentapetalae</taxon>
        <taxon>rosids</taxon>
        <taxon>malvids</taxon>
        <taxon>Brassicales</taxon>
        <taxon>Brassicaceae</taxon>
        <taxon>Camelineae</taxon>
        <taxon>Arabidopsis</taxon>
    </lineage>
</organism>
<name>FB122_ARATH</name>
<reference key="1">
    <citation type="journal article" date="1999" name="Nature">
        <title>Sequence and analysis of chromosome 2 of the plant Arabidopsis thaliana.</title>
        <authorList>
            <person name="Lin X."/>
            <person name="Kaul S."/>
            <person name="Rounsley S.D."/>
            <person name="Shea T.P."/>
            <person name="Benito M.-I."/>
            <person name="Town C.D."/>
            <person name="Fujii C.Y."/>
            <person name="Mason T.M."/>
            <person name="Bowman C.L."/>
            <person name="Barnstead M.E."/>
            <person name="Feldblyum T.V."/>
            <person name="Buell C.R."/>
            <person name="Ketchum K.A."/>
            <person name="Lee J.J."/>
            <person name="Ronning C.M."/>
            <person name="Koo H.L."/>
            <person name="Moffat K.S."/>
            <person name="Cronin L.A."/>
            <person name="Shen M."/>
            <person name="Pai G."/>
            <person name="Van Aken S."/>
            <person name="Umayam L."/>
            <person name="Tallon L.J."/>
            <person name="Gill J.E."/>
            <person name="Adams M.D."/>
            <person name="Carrera A.J."/>
            <person name="Creasy T.H."/>
            <person name="Goodman H.M."/>
            <person name="Somerville C.R."/>
            <person name="Copenhaver G.P."/>
            <person name="Preuss D."/>
            <person name="Nierman W.C."/>
            <person name="White O."/>
            <person name="Eisen J.A."/>
            <person name="Salzberg S.L."/>
            <person name="Fraser C.M."/>
            <person name="Venter J.C."/>
        </authorList>
    </citation>
    <scope>NUCLEOTIDE SEQUENCE [LARGE SCALE GENOMIC DNA]</scope>
    <source>
        <strain>cv. Columbia</strain>
    </source>
</reference>
<reference key="2">
    <citation type="journal article" date="2017" name="Plant J.">
        <title>Araport11: a complete reannotation of the Arabidopsis thaliana reference genome.</title>
        <authorList>
            <person name="Cheng C.Y."/>
            <person name="Krishnakumar V."/>
            <person name="Chan A.P."/>
            <person name="Thibaud-Nissen F."/>
            <person name="Schobel S."/>
            <person name="Town C.D."/>
        </authorList>
    </citation>
    <scope>GENOME REANNOTATION</scope>
    <source>
        <strain>cv. Columbia</strain>
    </source>
</reference>